<accession>Q7N561</accession>
<gene>
    <name evidence="2" type="primary">pllA</name>
    <name evidence="5" type="ordered locus">plu2096</name>
</gene>
<protein>
    <recommendedName>
        <fullName evidence="2">Lectin A</fullName>
    </recommendedName>
    <alternativeName>
        <fullName evidence="4">Alpha-galactoside-binding lectin</fullName>
    </alternativeName>
    <alternativeName>
        <fullName evidence="2">Galactose-binding lectin PllA</fullName>
    </alternativeName>
</protein>
<proteinExistence type="evidence at protein level"/>
<dbReference type="EMBL" id="BX571866">
    <property type="protein sequence ID" value="CAE14389.1"/>
    <property type="molecule type" value="Genomic_DNA"/>
</dbReference>
<dbReference type="RefSeq" id="WP_011146351.1">
    <property type="nucleotide sequence ID" value="NC_005126.1"/>
</dbReference>
<dbReference type="PDB" id="5ODU">
    <property type="method" value="X-ray"/>
    <property type="resolution" value="1.56 A"/>
    <property type="chains" value="A/B/C/D/E/F/G/H=1-122"/>
</dbReference>
<dbReference type="PDB" id="5OFI">
    <property type="method" value="X-ray"/>
    <property type="resolution" value="2.00 A"/>
    <property type="chains" value="A/B/C/D/E/F/G/H=1-122"/>
</dbReference>
<dbReference type="PDB" id="5OFX">
    <property type="method" value="X-ray"/>
    <property type="resolution" value="1.75 A"/>
    <property type="chains" value="A/B/C/D/E/F/G/H=1-122"/>
</dbReference>
<dbReference type="PDB" id="5OFZ">
    <property type="method" value="X-ray"/>
    <property type="resolution" value="1.75 A"/>
    <property type="chains" value="A/B/C/D=1-122"/>
</dbReference>
<dbReference type="PDBsum" id="5ODU"/>
<dbReference type="PDBsum" id="5OFI"/>
<dbReference type="PDBsum" id="5OFX"/>
<dbReference type="PDBsum" id="5OFZ"/>
<dbReference type="SMR" id="Q7N561"/>
<dbReference type="STRING" id="243265.plu2096"/>
<dbReference type="BindingDB" id="Q7N561"/>
<dbReference type="ChEMBL" id="CHEMBL5169234"/>
<dbReference type="UniLectin" id="Q7N561"/>
<dbReference type="GeneID" id="48848375"/>
<dbReference type="KEGG" id="plu:plu2096"/>
<dbReference type="eggNOG" id="ENOG50330FC">
    <property type="taxonomic scope" value="Bacteria"/>
</dbReference>
<dbReference type="HOGENOM" id="CLU_162760_0_0_6"/>
<dbReference type="OrthoDB" id="6444532at2"/>
<dbReference type="Proteomes" id="UP000002514">
    <property type="component" value="Chromosome"/>
</dbReference>
<dbReference type="GO" id="GO:0030246">
    <property type="term" value="F:carbohydrate binding"/>
    <property type="evidence" value="ECO:0007669"/>
    <property type="project" value="UniProtKB-KW"/>
</dbReference>
<dbReference type="GO" id="GO:0046872">
    <property type="term" value="F:metal ion binding"/>
    <property type="evidence" value="ECO:0007669"/>
    <property type="project" value="UniProtKB-KW"/>
</dbReference>
<dbReference type="Gene3D" id="2.60.120.430">
    <property type="entry name" value="Galactose-binding lectin"/>
    <property type="match status" value="1"/>
</dbReference>
<dbReference type="InterPro" id="IPR008979">
    <property type="entry name" value="Galactose-bd-like_sf"/>
</dbReference>
<dbReference type="InterPro" id="IPR012905">
    <property type="entry name" value="PA-IL"/>
</dbReference>
<dbReference type="Pfam" id="PF07828">
    <property type="entry name" value="PA-IL"/>
    <property type="match status" value="1"/>
</dbReference>
<dbReference type="PIRSF" id="PIRSF020485">
    <property type="entry name" value="PA-IL"/>
    <property type="match status" value="1"/>
</dbReference>
<dbReference type="SUPFAM" id="SSF49785">
    <property type="entry name" value="Galactose-binding domain-like"/>
    <property type="match status" value="1"/>
</dbReference>
<name>PLLA_PHOLL</name>
<organism>
    <name type="scientific">Photorhabdus laumondii subsp. laumondii (strain DSM 15139 / CIP 105565 / TT01)</name>
    <name type="common">Photorhabdus luminescens subsp. laumondii</name>
    <dbReference type="NCBI Taxonomy" id="243265"/>
    <lineage>
        <taxon>Bacteria</taxon>
        <taxon>Pseudomonadati</taxon>
        <taxon>Pseudomonadota</taxon>
        <taxon>Gammaproteobacteria</taxon>
        <taxon>Enterobacterales</taxon>
        <taxon>Morganellaceae</taxon>
        <taxon>Photorhabdus</taxon>
    </lineage>
</organism>
<keyword id="KW-0002">3D-structure</keyword>
<keyword id="KW-0106">Calcium</keyword>
<keyword id="KW-0430">Lectin</keyword>
<keyword id="KW-0479">Metal-binding</keyword>
<keyword id="KW-1185">Reference proteome</keyword>
<evidence type="ECO:0000269" key="1">
    <source>
    </source>
</evidence>
<evidence type="ECO:0000303" key="2">
    <source>
    </source>
</evidence>
<evidence type="ECO:0000305" key="3"/>
<evidence type="ECO:0000305" key="4">
    <source>
    </source>
</evidence>
<evidence type="ECO:0000312" key="5">
    <source>
        <dbReference type="EMBL" id="CAE14389.1"/>
    </source>
</evidence>
<evidence type="ECO:0007744" key="6">
    <source>
        <dbReference type="PDB" id="5ODU"/>
    </source>
</evidence>
<evidence type="ECO:0007744" key="7">
    <source>
        <dbReference type="PDB" id="5OFI"/>
    </source>
</evidence>
<evidence type="ECO:0007744" key="8">
    <source>
        <dbReference type="PDB" id="5OFX"/>
    </source>
</evidence>
<evidence type="ECO:0007744" key="9">
    <source>
        <dbReference type="PDB" id="5OFZ"/>
    </source>
</evidence>
<evidence type="ECO:0007829" key="10">
    <source>
        <dbReference type="PDB" id="5ODU"/>
    </source>
</evidence>
<comment type="function">
    <text evidence="1">Lectin that specifically binds alpha-galactoside-terminating glycoconjugates. Shows high apparent binding to the alpha-Gal epitope (Gal-alpha-1,3-Gal-beta-1,4-GlcNAc terminating glycans) as well as to Gal-alpha-1,4-GlcNAc and Gal-alpha-1,3-GalNAc. Gal-alpha-1,3-GalNAc may be one natural ligand bound by PllA both in the nematode symbiont and in infected insects.</text>
</comment>
<comment type="subunit">
    <text evidence="1">Homotetramer.</text>
</comment>
<comment type="biotechnology">
    <text evidence="1">Can be used as a fluorescent probe for the specific detection and visualization of the alpha-Gal epitope present on porcine tissues. This epitope is mainly responsible for hyperacute rejection of porcine organ transplants in humans during xenotransplantation.</text>
</comment>
<comment type="similarity">
    <text evidence="3">Belongs to the LecA/PllA lectin family.</text>
</comment>
<feature type="chain" id="PRO_0000443107" description="Lectin A">
    <location>
        <begin position="1"/>
        <end position="122"/>
    </location>
</feature>
<feature type="binding site" evidence="1 6">
    <location>
        <position position="38"/>
    </location>
    <ligand>
        <name>Ca(2+)</name>
        <dbReference type="ChEBI" id="CHEBI:29108"/>
    </ligand>
</feature>
<feature type="binding site" evidence="1 6">
    <location>
        <position position="44"/>
    </location>
    <ligand>
        <name>an alpha-D-galactoside</name>
        <dbReference type="ChEBI" id="CHEBI:46953"/>
    </ligand>
</feature>
<feature type="binding site" evidence="1 6">
    <location>
        <position position="57"/>
    </location>
    <ligand>
        <name>an alpha-D-galactoside</name>
        <dbReference type="ChEBI" id="CHEBI:46953"/>
    </ligand>
</feature>
<feature type="binding site" evidence="1 6">
    <location>
        <position position="96"/>
    </location>
    <ligand>
        <name>an alpha-D-galactoside</name>
        <dbReference type="ChEBI" id="CHEBI:46953"/>
    </ligand>
</feature>
<feature type="binding site" evidence="1 6">
    <location>
        <position position="96"/>
    </location>
    <ligand>
        <name>Ca(2+)</name>
        <dbReference type="ChEBI" id="CHEBI:29108"/>
    </ligand>
</feature>
<feature type="binding site" evidence="1 6">
    <location>
        <position position="100"/>
    </location>
    <ligand>
        <name>Ca(2+)</name>
        <dbReference type="ChEBI" id="CHEBI:29108"/>
    </ligand>
</feature>
<feature type="binding site" evidence="1 6">
    <location>
        <position position="103"/>
    </location>
    <ligand>
        <name>an alpha-D-galactoside</name>
        <dbReference type="ChEBI" id="CHEBI:46953"/>
    </ligand>
</feature>
<feature type="binding site" evidence="1 6">
    <location>
        <position position="103"/>
    </location>
    <ligand>
        <name>Ca(2+)</name>
        <dbReference type="ChEBI" id="CHEBI:29108"/>
    </ligand>
</feature>
<feature type="binding site" evidence="1 6">
    <location>
        <position position="104"/>
    </location>
    <ligand>
        <name>Ca(2+)</name>
        <dbReference type="ChEBI" id="CHEBI:29108"/>
    </ligand>
</feature>
<feature type="strand" evidence="10">
    <location>
        <begin position="4"/>
        <end position="9"/>
    </location>
</feature>
<feature type="strand" evidence="10">
    <location>
        <begin position="16"/>
        <end position="22"/>
    </location>
</feature>
<feature type="strand" evidence="10">
    <location>
        <begin position="27"/>
        <end position="33"/>
    </location>
</feature>
<feature type="strand" evidence="10">
    <location>
        <begin position="36"/>
        <end position="41"/>
    </location>
</feature>
<feature type="strand" evidence="10">
    <location>
        <begin position="45"/>
        <end position="47"/>
    </location>
</feature>
<feature type="turn" evidence="10">
    <location>
        <begin position="59"/>
        <end position="62"/>
    </location>
</feature>
<feature type="strand" evidence="10">
    <location>
        <begin position="63"/>
        <end position="68"/>
    </location>
</feature>
<feature type="strand" evidence="10">
    <location>
        <begin position="71"/>
        <end position="74"/>
    </location>
</feature>
<feature type="strand" evidence="10">
    <location>
        <begin position="78"/>
        <end position="83"/>
    </location>
</feature>
<feature type="strand" evidence="10">
    <location>
        <begin position="88"/>
        <end position="94"/>
    </location>
</feature>
<feature type="helix" evidence="10">
    <location>
        <begin position="101"/>
        <end position="103"/>
    </location>
</feature>
<feature type="strand" evidence="10">
    <location>
        <begin position="105"/>
        <end position="116"/>
    </location>
</feature>
<sequence length="122" mass="12958">MSDWSGSVPANAENGKSTGLILKQGDTISVVAHGWVKYGRDNVEWAAPDGPVPNNPQPSSIATLVAKIANKKFAIGNGVLHKTVPVDGELILLFNDVPGTFGDNSGEFQVEVIIESRYSPLK</sequence>
<reference key="1">
    <citation type="journal article" date="2003" name="Nat. Biotechnol.">
        <title>The genome sequence of the entomopathogenic bacterium Photorhabdus luminescens.</title>
        <authorList>
            <person name="Duchaud E."/>
            <person name="Rusniok C."/>
            <person name="Frangeul L."/>
            <person name="Buchrieser C."/>
            <person name="Givaudan A."/>
            <person name="Taourit S."/>
            <person name="Bocs S."/>
            <person name="Boursaux-Eude C."/>
            <person name="Chandler M."/>
            <person name="Charles J.-F."/>
            <person name="Dassa E."/>
            <person name="Derose R."/>
            <person name="Derzelle S."/>
            <person name="Freyssinet G."/>
            <person name="Gaudriault S."/>
            <person name="Medigue C."/>
            <person name="Lanois A."/>
            <person name="Powell K."/>
            <person name="Siguier P."/>
            <person name="Vincent R."/>
            <person name="Wingate V."/>
            <person name="Zouine M."/>
            <person name="Glaser P."/>
            <person name="Boemare N."/>
            <person name="Danchin A."/>
            <person name="Kunst F."/>
        </authorList>
    </citation>
    <scope>NUCLEOTIDE SEQUENCE [LARGE SCALE GENOMIC DNA]</scope>
    <source>
        <strain>DSM 15139 / CIP 105565 / TT01</strain>
    </source>
</reference>
<reference evidence="6 7 8 9" key="2">
    <citation type="journal article" date="2017" name="J. Biol. Chem.">
        <title>Photorhabdus luminescens lectin A (PllA) - a new probe for detecting alpha-galactoside-terminating glycoconjugates.</title>
        <authorList>
            <person name="Beshr G."/>
            <person name="Sikandar A."/>
            <person name="Jemiller E.M."/>
            <person name="Klymiuk N."/>
            <person name="Hauck D."/>
            <person name="Wagner S."/>
            <person name="Wolf E."/>
            <person name="Koehnke J."/>
            <person name="Titz A."/>
        </authorList>
    </citation>
    <scope>X-RAY CRYSTALLOGRAPHY (1.56 ANGSTROMS) OF APOPROTEIN AND IN COMPLEX WITH VARIOUS CARBOHYDRATES</scope>
    <scope>FUNCTION</scope>
    <scope>CARBOHYDRATE SPECIFICITY</scope>
    <scope>BIOTECHNOLOGY</scope>
    <scope>SUBUNIT</scope>
    <source>
        <strain>DSM 15139 / CIP 105565 / TT01</strain>
    </source>
</reference>